<keyword id="KW-0066">ATP synthesis</keyword>
<keyword id="KW-0997">Cell inner membrane</keyword>
<keyword id="KW-1003">Cell membrane</keyword>
<keyword id="KW-0138">CF(0)</keyword>
<keyword id="KW-0375">Hydrogen ion transport</keyword>
<keyword id="KW-0406">Ion transport</keyword>
<keyword id="KW-0472">Membrane</keyword>
<keyword id="KW-1185">Reference proteome</keyword>
<keyword id="KW-0812">Transmembrane</keyword>
<keyword id="KW-1133">Transmembrane helix</keyword>
<keyword id="KW-0813">Transport</keyword>
<sequence>MDATFWALIGLIIFLAILAYLKVPGMVGRSLDERADRIKNELEEARTLREEAQQLLAEYHRKRKEAEKEAGDIVASAEREAKALLEDAKRATEEYVARRNKLAEQKIATAEVDAINAVRASAVDLAVAAAGKIVADKVDTKVAGNLFKDALSQVKSNLN</sequence>
<organism>
    <name type="scientific">Brucella anthropi (strain ATCC 49188 / DSM 6882 / CCUG 24695 / JCM 21032 / LMG 3331 / NBRC 15819 / NCTC 12168 / Alc 37)</name>
    <name type="common">Ochrobactrum anthropi</name>
    <dbReference type="NCBI Taxonomy" id="439375"/>
    <lineage>
        <taxon>Bacteria</taxon>
        <taxon>Pseudomonadati</taxon>
        <taxon>Pseudomonadota</taxon>
        <taxon>Alphaproteobacteria</taxon>
        <taxon>Hyphomicrobiales</taxon>
        <taxon>Brucellaceae</taxon>
        <taxon>Brucella/Ochrobactrum group</taxon>
        <taxon>Brucella</taxon>
    </lineage>
</organism>
<evidence type="ECO:0000255" key="1">
    <source>
        <dbReference type="HAMAP-Rule" id="MF_01398"/>
    </source>
</evidence>
<gene>
    <name evidence="1" type="primary">atpF2</name>
    <name type="ordered locus">Oant_0503</name>
</gene>
<feature type="chain" id="PRO_0000368638" description="ATP synthase subunit b 2">
    <location>
        <begin position="1"/>
        <end position="159"/>
    </location>
</feature>
<feature type="transmembrane region" description="Helical" evidence="1">
    <location>
        <begin position="1"/>
        <end position="21"/>
    </location>
</feature>
<reference key="1">
    <citation type="journal article" date="2011" name="J. Bacteriol.">
        <title>Genome of Ochrobactrum anthropi ATCC 49188 T, a versatile opportunistic pathogen and symbiont of several eukaryotic hosts.</title>
        <authorList>
            <person name="Chain P.S."/>
            <person name="Lang D.M."/>
            <person name="Comerci D.J."/>
            <person name="Malfatti S.A."/>
            <person name="Vergez L.M."/>
            <person name="Shin M."/>
            <person name="Ugalde R.A."/>
            <person name="Garcia E."/>
            <person name="Tolmasky M.E."/>
        </authorList>
    </citation>
    <scope>NUCLEOTIDE SEQUENCE [LARGE SCALE GENOMIC DNA]</scope>
    <source>
        <strain>ATCC 49188 / DSM 6882 / CCUG 24695 / JCM 21032 / LMG 3331 / NBRC 15819 / NCTC 12168 / Alc 37</strain>
    </source>
</reference>
<proteinExistence type="inferred from homology"/>
<protein>
    <recommendedName>
        <fullName evidence="1">ATP synthase subunit b 2</fullName>
    </recommendedName>
    <alternativeName>
        <fullName evidence="1">ATP synthase F(0) sector subunit b 2</fullName>
    </alternativeName>
    <alternativeName>
        <fullName evidence="1">ATPase subunit I 2</fullName>
    </alternativeName>
    <alternativeName>
        <fullName evidence="1">F-type ATPase subunit b 2</fullName>
        <shortName evidence="1">F-ATPase subunit b 2</shortName>
    </alternativeName>
</protein>
<comment type="function">
    <text evidence="1">F(1)F(0) ATP synthase produces ATP from ADP in the presence of a proton or sodium gradient. F-type ATPases consist of two structural domains, F(1) containing the extramembraneous catalytic core and F(0) containing the membrane proton channel, linked together by a central stalk and a peripheral stalk. During catalysis, ATP synthesis in the catalytic domain of F(1) is coupled via a rotary mechanism of the central stalk subunits to proton translocation.</text>
</comment>
<comment type="function">
    <text evidence="1">Component of the F(0) channel, it forms part of the peripheral stalk, linking F(1) to F(0).</text>
</comment>
<comment type="subunit">
    <text evidence="1">F-type ATPases have 2 components, F(1) - the catalytic core - and F(0) - the membrane proton channel. F(1) has five subunits: alpha(3), beta(3), gamma(1), delta(1), epsilon(1). F(0) has three main subunits: a(1), b(2) and c(10-14). The alpha and beta chains form an alternating ring which encloses part of the gamma chain. F(1) is attached to F(0) by a central stalk formed by the gamma and epsilon chains, while a peripheral stalk is formed by the delta and b chains.</text>
</comment>
<comment type="subcellular location">
    <subcellularLocation>
        <location evidence="1">Cell inner membrane</location>
        <topology evidence="1">Single-pass membrane protein</topology>
    </subcellularLocation>
</comment>
<comment type="similarity">
    <text evidence="1">Belongs to the ATPase B chain family.</text>
</comment>
<dbReference type="EMBL" id="CP000758">
    <property type="protein sequence ID" value="ABS13234.1"/>
    <property type="molecule type" value="Genomic_DNA"/>
</dbReference>
<dbReference type="RefSeq" id="WP_010658323.1">
    <property type="nucleotide sequence ID" value="NC_009667.1"/>
</dbReference>
<dbReference type="SMR" id="A6WW80"/>
<dbReference type="STRING" id="439375.Oant_0503"/>
<dbReference type="KEGG" id="oan:Oant_0503"/>
<dbReference type="eggNOG" id="COG0711">
    <property type="taxonomic scope" value="Bacteria"/>
</dbReference>
<dbReference type="HOGENOM" id="CLU_079215_6_1_5"/>
<dbReference type="PhylomeDB" id="A6WW80"/>
<dbReference type="Proteomes" id="UP000002301">
    <property type="component" value="Chromosome 1"/>
</dbReference>
<dbReference type="GO" id="GO:0005886">
    <property type="term" value="C:plasma membrane"/>
    <property type="evidence" value="ECO:0007669"/>
    <property type="project" value="UniProtKB-SubCell"/>
</dbReference>
<dbReference type="GO" id="GO:0045259">
    <property type="term" value="C:proton-transporting ATP synthase complex"/>
    <property type="evidence" value="ECO:0007669"/>
    <property type="project" value="UniProtKB-KW"/>
</dbReference>
<dbReference type="GO" id="GO:0046933">
    <property type="term" value="F:proton-transporting ATP synthase activity, rotational mechanism"/>
    <property type="evidence" value="ECO:0007669"/>
    <property type="project" value="UniProtKB-UniRule"/>
</dbReference>
<dbReference type="GO" id="GO:0046961">
    <property type="term" value="F:proton-transporting ATPase activity, rotational mechanism"/>
    <property type="evidence" value="ECO:0007669"/>
    <property type="project" value="TreeGrafter"/>
</dbReference>
<dbReference type="CDD" id="cd06503">
    <property type="entry name" value="ATP-synt_Fo_b"/>
    <property type="match status" value="1"/>
</dbReference>
<dbReference type="HAMAP" id="MF_01398">
    <property type="entry name" value="ATP_synth_b_bprime"/>
    <property type="match status" value="1"/>
</dbReference>
<dbReference type="InterPro" id="IPR002146">
    <property type="entry name" value="ATP_synth_b/b'su_bac/chlpt"/>
</dbReference>
<dbReference type="InterPro" id="IPR050059">
    <property type="entry name" value="ATP_synthase_B_chain"/>
</dbReference>
<dbReference type="NCBIfam" id="NF006611">
    <property type="entry name" value="PRK09173.1"/>
    <property type="match status" value="1"/>
</dbReference>
<dbReference type="PANTHER" id="PTHR33445:SF1">
    <property type="entry name" value="ATP SYNTHASE SUBUNIT B"/>
    <property type="match status" value="1"/>
</dbReference>
<dbReference type="PANTHER" id="PTHR33445">
    <property type="entry name" value="ATP SYNTHASE SUBUNIT B', CHLOROPLASTIC"/>
    <property type="match status" value="1"/>
</dbReference>
<dbReference type="Pfam" id="PF00430">
    <property type="entry name" value="ATP-synt_B"/>
    <property type="match status" value="1"/>
</dbReference>
<name>ATPF2_BRUA4</name>
<accession>A6WW80</accession>